<dbReference type="EC" id="1.2.1.72" evidence="2"/>
<dbReference type="EMBL" id="CP000468">
    <property type="protein sequence ID" value="ABJ02351.1"/>
    <property type="molecule type" value="Genomic_DNA"/>
</dbReference>
<dbReference type="RefSeq" id="WP_000218482.1">
    <property type="nucleotide sequence ID" value="NZ_CADILS010000010.1"/>
</dbReference>
<dbReference type="SMR" id="A1AFB1"/>
<dbReference type="KEGG" id="ecv:APECO1_3606"/>
<dbReference type="HOGENOM" id="CLU_030140_0_2_6"/>
<dbReference type="UniPathway" id="UPA00244">
    <property type="reaction ID" value="UER00309"/>
</dbReference>
<dbReference type="Proteomes" id="UP000008216">
    <property type="component" value="Chromosome"/>
</dbReference>
<dbReference type="GO" id="GO:0005737">
    <property type="term" value="C:cytoplasm"/>
    <property type="evidence" value="ECO:0007669"/>
    <property type="project" value="UniProtKB-SubCell"/>
</dbReference>
<dbReference type="GO" id="GO:0048001">
    <property type="term" value="F:erythrose-4-phosphate dehydrogenase activity"/>
    <property type="evidence" value="ECO:0007669"/>
    <property type="project" value="UniProtKB-UniRule"/>
</dbReference>
<dbReference type="GO" id="GO:0051287">
    <property type="term" value="F:NAD binding"/>
    <property type="evidence" value="ECO:0007669"/>
    <property type="project" value="InterPro"/>
</dbReference>
<dbReference type="GO" id="GO:0042823">
    <property type="term" value="P:pyridoxal phosphate biosynthetic process"/>
    <property type="evidence" value="ECO:0007669"/>
    <property type="project" value="UniProtKB-UniRule"/>
</dbReference>
<dbReference type="GO" id="GO:0008615">
    <property type="term" value="P:pyridoxine biosynthetic process"/>
    <property type="evidence" value="ECO:0007669"/>
    <property type="project" value="UniProtKB-UniRule"/>
</dbReference>
<dbReference type="CDD" id="cd23937">
    <property type="entry name" value="GAPDH_C_E4PDH"/>
    <property type="match status" value="1"/>
</dbReference>
<dbReference type="CDD" id="cd17892">
    <property type="entry name" value="GAPDH_N_E4PDH"/>
    <property type="match status" value="1"/>
</dbReference>
<dbReference type="FunFam" id="3.30.360.10:FF:000007">
    <property type="entry name" value="D-erythrose-4-phosphate dehydrogenase"/>
    <property type="match status" value="1"/>
</dbReference>
<dbReference type="FunFam" id="3.40.50.720:FF:000001">
    <property type="entry name" value="Glyceraldehyde-3-phosphate dehydrogenase"/>
    <property type="match status" value="1"/>
</dbReference>
<dbReference type="Gene3D" id="3.30.360.10">
    <property type="entry name" value="Dihydrodipicolinate Reductase, domain 2"/>
    <property type="match status" value="1"/>
</dbReference>
<dbReference type="Gene3D" id="3.40.50.720">
    <property type="entry name" value="NAD(P)-binding Rossmann-like Domain"/>
    <property type="match status" value="1"/>
</dbReference>
<dbReference type="HAMAP" id="MF_01640">
    <property type="entry name" value="E4P_dehydrog"/>
    <property type="match status" value="1"/>
</dbReference>
<dbReference type="InterPro" id="IPR006422">
    <property type="entry name" value="E4P_DH_bac"/>
</dbReference>
<dbReference type="InterPro" id="IPR020831">
    <property type="entry name" value="GlycerAld/Erythrose_P_DH"/>
</dbReference>
<dbReference type="InterPro" id="IPR020830">
    <property type="entry name" value="GlycerAld_3-P_DH_AS"/>
</dbReference>
<dbReference type="InterPro" id="IPR020829">
    <property type="entry name" value="GlycerAld_3-P_DH_cat"/>
</dbReference>
<dbReference type="InterPro" id="IPR020828">
    <property type="entry name" value="GlycerAld_3-P_DH_NAD(P)-bd"/>
</dbReference>
<dbReference type="InterPro" id="IPR036291">
    <property type="entry name" value="NAD(P)-bd_dom_sf"/>
</dbReference>
<dbReference type="NCBIfam" id="TIGR01532">
    <property type="entry name" value="E4PD_g-proteo"/>
    <property type="match status" value="1"/>
</dbReference>
<dbReference type="NCBIfam" id="NF010058">
    <property type="entry name" value="PRK13535.1"/>
    <property type="match status" value="1"/>
</dbReference>
<dbReference type="PANTHER" id="PTHR43148">
    <property type="entry name" value="GLYCERALDEHYDE-3-PHOSPHATE DEHYDROGENASE 2"/>
    <property type="match status" value="1"/>
</dbReference>
<dbReference type="Pfam" id="PF02800">
    <property type="entry name" value="Gp_dh_C"/>
    <property type="match status" value="1"/>
</dbReference>
<dbReference type="Pfam" id="PF00044">
    <property type="entry name" value="Gp_dh_N"/>
    <property type="match status" value="1"/>
</dbReference>
<dbReference type="PIRSF" id="PIRSF000149">
    <property type="entry name" value="GAP_DH"/>
    <property type="match status" value="1"/>
</dbReference>
<dbReference type="PRINTS" id="PR00078">
    <property type="entry name" value="G3PDHDRGNASE"/>
</dbReference>
<dbReference type="SMART" id="SM00846">
    <property type="entry name" value="Gp_dh_N"/>
    <property type="match status" value="1"/>
</dbReference>
<dbReference type="SUPFAM" id="SSF55347">
    <property type="entry name" value="Glyceraldehyde-3-phosphate dehydrogenase-like, C-terminal domain"/>
    <property type="match status" value="1"/>
</dbReference>
<dbReference type="SUPFAM" id="SSF51735">
    <property type="entry name" value="NAD(P)-binding Rossmann-fold domains"/>
    <property type="match status" value="1"/>
</dbReference>
<dbReference type="PROSITE" id="PS00071">
    <property type="entry name" value="GAPDH"/>
    <property type="match status" value="1"/>
</dbReference>
<protein>
    <recommendedName>
        <fullName evidence="2">D-erythrose-4-phosphate dehydrogenase</fullName>
        <shortName evidence="2">E4PDH</shortName>
        <ecNumber evidence="2">1.2.1.72</ecNumber>
    </recommendedName>
</protein>
<gene>
    <name evidence="2" type="primary">epd</name>
    <name type="ordered locus">Ecok1_28570</name>
    <name type="ORF">APECO1_3606</name>
</gene>
<accession>A1AFB1</accession>
<reference key="1">
    <citation type="journal article" date="2007" name="J. Bacteriol.">
        <title>The genome sequence of avian pathogenic Escherichia coli strain O1:K1:H7 shares strong similarities with human extraintestinal pathogenic E. coli genomes.</title>
        <authorList>
            <person name="Johnson T.J."/>
            <person name="Kariyawasam S."/>
            <person name="Wannemuehler Y."/>
            <person name="Mangiamele P."/>
            <person name="Johnson S.J."/>
            <person name="Doetkott C."/>
            <person name="Skyberg J.A."/>
            <person name="Lynne A.M."/>
            <person name="Johnson J.R."/>
            <person name="Nolan L.K."/>
        </authorList>
    </citation>
    <scope>NUCLEOTIDE SEQUENCE [LARGE SCALE GENOMIC DNA]</scope>
</reference>
<name>E4PD_ECOK1</name>
<proteinExistence type="inferred from homology"/>
<keyword id="KW-0963">Cytoplasm</keyword>
<keyword id="KW-0520">NAD</keyword>
<keyword id="KW-0560">Oxidoreductase</keyword>
<keyword id="KW-0664">Pyridoxine biosynthesis</keyword>
<keyword id="KW-1185">Reference proteome</keyword>
<organism>
    <name type="scientific">Escherichia coli O1:K1 / APEC</name>
    <dbReference type="NCBI Taxonomy" id="405955"/>
    <lineage>
        <taxon>Bacteria</taxon>
        <taxon>Pseudomonadati</taxon>
        <taxon>Pseudomonadota</taxon>
        <taxon>Gammaproteobacteria</taxon>
        <taxon>Enterobacterales</taxon>
        <taxon>Enterobacteriaceae</taxon>
        <taxon>Escherichia</taxon>
    </lineage>
</organism>
<evidence type="ECO:0000250" key="1"/>
<evidence type="ECO:0000255" key="2">
    <source>
        <dbReference type="HAMAP-Rule" id="MF_01640"/>
    </source>
</evidence>
<comment type="function">
    <text evidence="2">Catalyzes the NAD-dependent conversion of D-erythrose 4-phosphate to 4-phosphoerythronate.</text>
</comment>
<comment type="catalytic activity">
    <reaction evidence="2">
        <text>D-erythrose 4-phosphate + NAD(+) + H2O = 4-phospho-D-erythronate + NADH + 2 H(+)</text>
        <dbReference type="Rhea" id="RHEA:12056"/>
        <dbReference type="ChEBI" id="CHEBI:15377"/>
        <dbReference type="ChEBI" id="CHEBI:15378"/>
        <dbReference type="ChEBI" id="CHEBI:16897"/>
        <dbReference type="ChEBI" id="CHEBI:57540"/>
        <dbReference type="ChEBI" id="CHEBI:57945"/>
        <dbReference type="ChEBI" id="CHEBI:58766"/>
        <dbReference type="EC" id="1.2.1.72"/>
    </reaction>
</comment>
<comment type="pathway">
    <text evidence="2">Cofactor biosynthesis; pyridoxine 5'-phosphate biosynthesis; pyridoxine 5'-phosphate from D-erythrose 4-phosphate: step 1/5.</text>
</comment>
<comment type="subunit">
    <text evidence="2">Homotetramer.</text>
</comment>
<comment type="subcellular location">
    <subcellularLocation>
        <location evidence="2">Cytoplasm</location>
    </subcellularLocation>
</comment>
<comment type="similarity">
    <text evidence="2">Belongs to the glyceraldehyde-3-phosphate dehydrogenase family. Epd subfamily.</text>
</comment>
<sequence>MTVRVAINGFGRIGRNVVRALYESGRRAEITVVAINELADAAGMAHLLKYDTSHGRFAWEVRQERDQLFVGDDAIRVLHERSLQSLPWRELGVDVVLDCTGVYGSREHGEAHIAAGAKKVLFSHPGSNDLDTTVVYGVNQDQLRAEHRIVSNASCTTNCIIPVIKLLDDAYGIESGTVTTIHSAMHDQQVIDAYHPDLRRTRAASQSIIPVDTKLAAGITRFFPQFNDRFEAIAVRVPTINVTAIDLSVTVKKPVKANEVNLLLQKAAQGAFHGIVDYAELPLVSVDFNHDPHSAIVDGTQTRVSGAHLIKTLVWCDNEWGFANRMLDTTLAMATVAFR</sequence>
<feature type="initiator methionine" description="Removed" evidence="1">
    <location>
        <position position="1"/>
    </location>
</feature>
<feature type="chain" id="PRO_0000293146" description="D-erythrose-4-phosphate dehydrogenase">
    <location>
        <begin position="2"/>
        <end position="339"/>
    </location>
</feature>
<feature type="active site" description="Nucleophile" evidence="2">
    <location>
        <position position="155"/>
    </location>
</feature>
<feature type="binding site" evidence="2">
    <location>
        <begin position="12"/>
        <end position="13"/>
    </location>
    <ligand>
        <name>NAD(+)</name>
        <dbReference type="ChEBI" id="CHEBI:57540"/>
    </ligand>
</feature>
<feature type="binding site" evidence="2">
    <location>
        <position position="81"/>
    </location>
    <ligand>
        <name>NAD(+)</name>
        <dbReference type="ChEBI" id="CHEBI:57540"/>
    </ligand>
</feature>
<feature type="binding site" evidence="2">
    <location>
        <begin position="154"/>
        <end position="156"/>
    </location>
    <ligand>
        <name>substrate</name>
    </ligand>
</feature>
<feature type="binding site" evidence="2">
    <location>
        <position position="200"/>
    </location>
    <ligand>
        <name>substrate</name>
    </ligand>
</feature>
<feature type="binding site" evidence="2">
    <location>
        <begin position="213"/>
        <end position="214"/>
    </location>
    <ligand>
        <name>substrate</name>
    </ligand>
</feature>
<feature type="binding site" evidence="2">
    <location>
        <position position="236"/>
    </location>
    <ligand>
        <name>substrate</name>
    </ligand>
</feature>
<feature type="binding site" evidence="2">
    <location>
        <position position="318"/>
    </location>
    <ligand>
        <name>NAD(+)</name>
        <dbReference type="ChEBI" id="CHEBI:57540"/>
    </ligand>
</feature>
<feature type="site" description="Activates thiol group during catalysis" evidence="2">
    <location>
        <position position="182"/>
    </location>
</feature>